<organism>
    <name type="scientific">Mycobacterium tuberculosis (strain ATCC 25177 / H37Ra)</name>
    <dbReference type="NCBI Taxonomy" id="419947"/>
    <lineage>
        <taxon>Bacteria</taxon>
        <taxon>Bacillati</taxon>
        <taxon>Actinomycetota</taxon>
        <taxon>Actinomycetes</taxon>
        <taxon>Mycobacteriales</taxon>
        <taxon>Mycobacteriaceae</taxon>
        <taxon>Mycobacterium</taxon>
        <taxon>Mycobacterium tuberculosis complex</taxon>
    </lineage>
</organism>
<keyword id="KW-0030">Aminoacyl-tRNA synthetase</keyword>
<keyword id="KW-0067">ATP-binding</keyword>
<keyword id="KW-0963">Cytoplasm</keyword>
<keyword id="KW-0436">Ligase</keyword>
<keyword id="KW-0547">Nucleotide-binding</keyword>
<keyword id="KW-0648">Protein biosynthesis</keyword>
<keyword id="KW-1185">Reference proteome</keyword>
<dbReference type="EC" id="6.1.1.17" evidence="1"/>
<dbReference type="EMBL" id="CP000611">
    <property type="protein sequence ID" value="ABQ74803.1"/>
    <property type="molecule type" value="Genomic_DNA"/>
</dbReference>
<dbReference type="RefSeq" id="WP_003415122.1">
    <property type="nucleotide sequence ID" value="NZ_CP016972.1"/>
</dbReference>
<dbReference type="SMR" id="A5U703"/>
<dbReference type="KEGG" id="mra:MRA_3021"/>
<dbReference type="eggNOG" id="COG0008">
    <property type="taxonomic scope" value="Bacteria"/>
</dbReference>
<dbReference type="HOGENOM" id="CLU_015768_6_1_11"/>
<dbReference type="Proteomes" id="UP000001988">
    <property type="component" value="Chromosome"/>
</dbReference>
<dbReference type="GO" id="GO:0005829">
    <property type="term" value="C:cytosol"/>
    <property type="evidence" value="ECO:0007669"/>
    <property type="project" value="TreeGrafter"/>
</dbReference>
<dbReference type="GO" id="GO:0005524">
    <property type="term" value="F:ATP binding"/>
    <property type="evidence" value="ECO:0007669"/>
    <property type="project" value="UniProtKB-UniRule"/>
</dbReference>
<dbReference type="GO" id="GO:0004818">
    <property type="term" value="F:glutamate-tRNA ligase activity"/>
    <property type="evidence" value="ECO:0007669"/>
    <property type="project" value="UniProtKB-UniRule"/>
</dbReference>
<dbReference type="GO" id="GO:0000049">
    <property type="term" value="F:tRNA binding"/>
    <property type="evidence" value="ECO:0007669"/>
    <property type="project" value="InterPro"/>
</dbReference>
<dbReference type="GO" id="GO:0008270">
    <property type="term" value="F:zinc ion binding"/>
    <property type="evidence" value="ECO:0007669"/>
    <property type="project" value="InterPro"/>
</dbReference>
<dbReference type="GO" id="GO:0006424">
    <property type="term" value="P:glutamyl-tRNA aminoacylation"/>
    <property type="evidence" value="ECO:0007669"/>
    <property type="project" value="UniProtKB-UniRule"/>
</dbReference>
<dbReference type="CDD" id="cd00808">
    <property type="entry name" value="GluRS_core"/>
    <property type="match status" value="1"/>
</dbReference>
<dbReference type="FunFam" id="3.40.50.620:FF:000149">
    <property type="entry name" value="Glutamate--tRNA ligase"/>
    <property type="match status" value="1"/>
</dbReference>
<dbReference type="FunFam" id="3.90.800.10:FF:000003">
    <property type="entry name" value="Glutamate--tRNA ligase"/>
    <property type="match status" value="1"/>
</dbReference>
<dbReference type="Gene3D" id="1.10.10.350">
    <property type="match status" value="1"/>
</dbReference>
<dbReference type="Gene3D" id="1.10.8.70">
    <property type="entry name" value="Glutamate-tRNA synthetase, class I, anticodon-binding domain 1"/>
    <property type="match status" value="1"/>
</dbReference>
<dbReference type="Gene3D" id="1.10.1160.10">
    <property type="entry name" value="Glutamyl-trna Synthetase, Domain 2"/>
    <property type="match status" value="1"/>
</dbReference>
<dbReference type="Gene3D" id="3.90.800.10">
    <property type="entry name" value="Glutamyl-tRNA Synthetase, Domain 3"/>
    <property type="match status" value="1"/>
</dbReference>
<dbReference type="Gene3D" id="3.40.50.620">
    <property type="entry name" value="HUPs"/>
    <property type="match status" value="1"/>
</dbReference>
<dbReference type="HAMAP" id="MF_00022">
    <property type="entry name" value="Glu_tRNA_synth_type1"/>
    <property type="match status" value="1"/>
</dbReference>
<dbReference type="InterPro" id="IPR045462">
    <property type="entry name" value="aa-tRNA-synth_I_cd-bd"/>
</dbReference>
<dbReference type="InterPro" id="IPR020751">
    <property type="entry name" value="aa-tRNA-synth_I_codon-bd_sub2"/>
</dbReference>
<dbReference type="InterPro" id="IPR008925">
    <property type="entry name" value="aa_tRNA-synth_I_cd-bd_sf"/>
</dbReference>
<dbReference type="InterPro" id="IPR004527">
    <property type="entry name" value="Glu-tRNA-ligase_bac/mito"/>
</dbReference>
<dbReference type="InterPro" id="IPR020752">
    <property type="entry name" value="Glu-tRNA-synth_I_codon-bd_sub1"/>
</dbReference>
<dbReference type="InterPro" id="IPR000924">
    <property type="entry name" value="Glu/Gln-tRNA-synth"/>
</dbReference>
<dbReference type="InterPro" id="IPR020058">
    <property type="entry name" value="Glu/Gln-tRNA-synth_Ib_cat-dom"/>
</dbReference>
<dbReference type="InterPro" id="IPR020061">
    <property type="entry name" value="Glu_tRNA_lig_a-bdl"/>
</dbReference>
<dbReference type="InterPro" id="IPR049940">
    <property type="entry name" value="GluQ/Sye"/>
</dbReference>
<dbReference type="InterPro" id="IPR033910">
    <property type="entry name" value="GluRS_core"/>
</dbReference>
<dbReference type="InterPro" id="IPR014729">
    <property type="entry name" value="Rossmann-like_a/b/a_fold"/>
</dbReference>
<dbReference type="NCBIfam" id="TIGR00464">
    <property type="entry name" value="gltX_bact"/>
    <property type="match status" value="1"/>
</dbReference>
<dbReference type="PANTHER" id="PTHR43311">
    <property type="entry name" value="GLUTAMATE--TRNA LIGASE"/>
    <property type="match status" value="1"/>
</dbReference>
<dbReference type="PANTHER" id="PTHR43311:SF2">
    <property type="entry name" value="GLUTAMATE--TRNA LIGASE, MITOCHONDRIAL-RELATED"/>
    <property type="match status" value="1"/>
</dbReference>
<dbReference type="Pfam" id="PF19269">
    <property type="entry name" value="Anticodon_2"/>
    <property type="match status" value="1"/>
</dbReference>
<dbReference type="Pfam" id="PF00749">
    <property type="entry name" value="tRNA-synt_1c"/>
    <property type="match status" value="1"/>
</dbReference>
<dbReference type="PRINTS" id="PR00987">
    <property type="entry name" value="TRNASYNTHGLU"/>
</dbReference>
<dbReference type="SUPFAM" id="SSF48163">
    <property type="entry name" value="An anticodon-binding domain of class I aminoacyl-tRNA synthetases"/>
    <property type="match status" value="1"/>
</dbReference>
<dbReference type="SUPFAM" id="SSF52374">
    <property type="entry name" value="Nucleotidylyl transferase"/>
    <property type="match status" value="1"/>
</dbReference>
<evidence type="ECO:0000255" key="1">
    <source>
        <dbReference type="HAMAP-Rule" id="MF_00022"/>
    </source>
</evidence>
<protein>
    <recommendedName>
        <fullName evidence="1">Glutamate--tRNA ligase</fullName>
        <ecNumber evidence="1">6.1.1.17</ecNumber>
    </recommendedName>
    <alternativeName>
        <fullName evidence="1">Glutamyl-tRNA synthetase</fullName>
        <shortName evidence="1">GluRS</shortName>
    </alternativeName>
</protein>
<name>SYE_MYCTA</name>
<sequence>MTATETVRVRFCPSPTGTPHVGLVRTALFNWAYARHTGGTFVFRIEDTDAQRDSEESYLALLDALRWLGLDWDEGPEVGGPYGPYRQSQRAEIYRDVLARLLAAGEAYHAFSTPEEVEARHVAAGRNPKLGYDNFDRHLTDAQRAAYLAEGRQPVVRLRMPDDDLAWNDLVRGPVTFAAGSVPDFALTRASGDPLYTLVNPCDDALMKITHVLRGEDLLPSTPRQLALHQALIRIGVAERIPKFAHLPTVLGEGTKKLSKRDPQSNLFAHRDRGFIPEGLLNYLALLGWSIADDHDLFGLDEMVAAFDVADVNSSPARFDQKKADALNAEHIRMLDVGDFTVRLRDHLDTHGHHIALDEAAFAAAAELVQTRIVVLGDAWELLKFFNDDQYVIDPKAAAKELGPDGAAVLDAALAALTSVTDWTAPLIEAALKDALIEGLALKPRKAFSPIRVAATGTTVSPPLFESLELLGRDRSMQRLRAARQLVGHA</sequence>
<proteinExistence type="inferred from homology"/>
<accession>A5U703</accession>
<feature type="chain" id="PRO_1000001924" description="Glutamate--tRNA ligase">
    <location>
        <begin position="1"/>
        <end position="490"/>
    </location>
</feature>
<feature type="short sequence motif" description="'HIGH' region" evidence="1">
    <location>
        <begin position="13"/>
        <end position="23"/>
    </location>
</feature>
<feature type="short sequence motif" description="'KMSKS' region" evidence="1">
    <location>
        <begin position="257"/>
        <end position="261"/>
    </location>
</feature>
<feature type="binding site" evidence="1">
    <location>
        <position position="260"/>
    </location>
    <ligand>
        <name>ATP</name>
        <dbReference type="ChEBI" id="CHEBI:30616"/>
    </ligand>
</feature>
<gene>
    <name evidence="1" type="primary">gltX</name>
    <name type="ordered locus">MRA_3021</name>
</gene>
<comment type="function">
    <text evidence="1">Catalyzes the attachment of glutamate to tRNA(Glu) in a two-step reaction: glutamate is first activated by ATP to form Glu-AMP and then transferred to the acceptor end of tRNA(Glu).</text>
</comment>
<comment type="catalytic activity">
    <reaction evidence="1">
        <text>tRNA(Glu) + L-glutamate + ATP = L-glutamyl-tRNA(Glu) + AMP + diphosphate</text>
        <dbReference type="Rhea" id="RHEA:23540"/>
        <dbReference type="Rhea" id="RHEA-COMP:9663"/>
        <dbReference type="Rhea" id="RHEA-COMP:9680"/>
        <dbReference type="ChEBI" id="CHEBI:29985"/>
        <dbReference type="ChEBI" id="CHEBI:30616"/>
        <dbReference type="ChEBI" id="CHEBI:33019"/>
        <dbReference type="ChEBI" id="CHEBI:78442"/>
        <dbReference type="ChEBI" id="CHEBI:78520"/>
        <dbReference type="ChEBI" id="CHEBI:456215"/>
        <dbReference type="EC" id="6.1.1.17"/>
    </reaction>
</comment>
<comment type="subunit">
    <text evidence="1">Monomer.</text>
</comment>
<comment type="subcellular location">
    <subcellularLocation>
        <location evidence="1">Cytoplasm</location>
    </subcellularLocation>
</comment>
<comment type="similarity">
    <text evidence="1">Belongs to the class-I aminoacyl-tRNA synthetase family. Glutamate--tRNA ligase type 1 subfamily.</text>
</comment>
<reference key="1">
    <citation type="journal article" date="2008" name="PLoS ONE">
        <title>Genetic basis of virulence attenuation revealed by comparative genomic analysis of Mycobacterium tuberculosis strain H37Ra versus H37Rv.</title>
        <authorList>
            <person name="Zheng H."/>
            <person name="Lu L."/>
            <person name="Wang B."/>
            <person name="Pu S."/>
            <person name="Zhang X."/>
            <person name="Zhu G."/>
            <person name="Shi W."/>
            <person name="Zhang L."/>
            <person name="Wang H."/>
            <person name="Wang S."/>
            <person name="Zhao G."/>
            <person name="Zhang Y."/>
        </authorList>
    </citation>
    <scope>NUCLEOTIDE SEQUENCE [LARGE SCALE GENOMIC DNA]</scope>
    <source>
        <strain>ATCC 25177 / H37Ra</strain>
    </source>
</reference>